<gene>
    <name evidence="4" type="primary">aaeR</name>
    <name evidence="5" type="synonym">qseA</name>
    <name type="synonym">yhcS</name>
    <name type="ordered locus">b3243</name>
    <name type="ordered locus">JW3212</name>
</gene>
<evidence type="ECO:0000255" key="1">
    <source>
        <dbReference type="PROSITE-ProRule" id="PRU00253"/>
    </source>
</evidence>
<evidence type="ECO:0000269" key="2">
    <source>
    </source>
</evidence>
<evidence type="ECO:0000269" key="3">
    <source>
    </source>
</evidence>
<evidence type="ECO:0000303" key="4">
    <source>
    </source>
</evidence>
<evidence type="ECO:0000303" key="5">
    <source>
    </source>
</evidence>
<evidence type="ECO:0000305" key="6"/>
<dbReference type="EMBL" id="U18997">
    <property type="protein sequence ID" value="AAA58045.1"/>
    <property type="molecule type" value="Genomic_DNA"/>
</dbReference>
<dbReference type="EMBL" id="U00096">
    <property type="protein sequence ID" value="AAC76275.1"/>
    <property type="molecule type" value="Genomic_DNA"/>
</dbReference>
<dbReference type="EMBL" id="AP009048">
    <property type="protein sequence ID" value="BAE77286.1"/>
    <property type="molecule type" value="Genomic_DNA"/>
</dbReference>
<dbReference type="PIR" id="E65116">
    <property type="entry name" value="E65116"/>
</dbReference>
<dbReference type="RefSeq" id="NP_417710.1">
    <property type="nucleotide sequence ID" value="NC_000913.3"/>
</dbReference>
<dbReference type="RefSeq" id="WP_000440317.1">
    <property type="nucleotide sequence ID" value="NZ_STEB01000012.1"/>
</dbReference>
<dbReference type="SMR" id="P67662"/>
<dbReference type="BioGRID" id="4260796">
    <property type="interactions" value="108"/>
</dbReference>
<dbReference type="DIP" id="DIP-12291N"/>
<dbReference type="FunCoup" id="P67662">
    <property type="interactions" value="16"/>
</dbReference>
<dbReference type="IntAct" id="P67662">
    <property type="interactions" value="3"/>
</dbReference>
<dbReference type="STRING" id="511145.b3243"/>
<dbReference type="PaxDb" id="511145-b3243"/>
<dbReference type="EnsemblBacteria" id="AAC76275">
    <property type="protein sequence ID" value="AAC76275"/>
    <property type="gene ID" value="b3243"/>
</dbReference>
<dbReference type="GeneID" id="93778742"/>
<dbReference type="GeneID" id="947760"/>
<dbReference type="KEGG" id="ecj:JW3212"/>
<dbReference type="KEGG" id="eco:b3243"/>
<dbReference type="KEGG" id="ecoc:C3026_17640"/>
<dbReference type="PATRIC" id="fig|1411691.4.peg.3485"/>
<dbReference type="EchoBASE" id="EB2676"/>
<dbReference type="eggNOG" id="COG0583">
    <property type="taxonomic scope" value="Bacteria"/>
</dbReference>
<dbReference type="HOGENOM" id="CLU_039613_16_2_6"/>
<dbReference type="InParanoid" id="P67662"/>
<dbReference type="OMA" id="DLANHSW"/>
<dbReference type="OrthoDB" id="8678019at2"/>
<dbReference type="PhylomeDB" id="P67662"/>
<dbReference type="BioCyc" id="EcoCyc:G7688-MONOMER"/>
<dbReference type="PRO" id="PR:P67662"/>
<dbReference type="Proteomes" id="UP000000625">
    <property type="component" value="Chromosome"/>
</dbReference>
<dbReference type="GO" id="GO:0003700">
    <property type="term" value="F:DNA-binding transcription factor activity"/>
    <property type="evidence" value="ECO:0007669"/>
    <property type="project" value="InterPro"/>
</dbReference>
<dbReference type="GO" id="GO:0000976">
    <property type="term" value="F:transcription cis-regulatory region binding"/>
    <property type="evidence" value="ECO:0000318"/>
    <property type="project" value="GO_Central"/>
</dbReference>
<dbReference type="GO" id="GO:0006351">
    <property type="term" value="P:DNA-templated transcription"/>
    <property type="evidence" value="ECO:0000315"/>
    <property type="project" value="EcoCyc"/>
</dbReference>
<dbReference type="GO" id="GO:0006352">
    <property type="term" value="P:DNA-templated transcription initiation"/>
    <property type="evidence" value="ECO:0000315"/>
    <property type="project" value="EcoliWiki"/>
</dbReference>
<dbReference type="GO" id="GO:0045893">
    <property type="term" value="P:positive regulation of DNA-templated transcription"/>
    <property type="evidence" value="ECO:0000315"/>
    <property type="project" value="EcoCyc"/>
</dbReference>
<dbReference type="GO" id="GO:0006355">
    <property type="term" value="P:regulation of DNA-templated transcription"/>
    <property type="evidence" value="ECO:0000315"/>
    <property type="project" value="EcoliWiki"/>
</dbReference>
<dbReference type="CDD" id="cd08422">
    <property type="entry name" value="PBP2_CrgA_like"/>
    <property type="match status" value="1"/>
</dbReference>
<dbReference type="FunFam" id="3.40.190.290:FF:000003">
    <property type="entry name" value="HTH-type transcriptional activator AaeR"/>
    <property type="match status" value="1"/>
</dbReference>
<dbReference type="FunFam" id="1.10.10.10:FF:000001">
    <property type="entry name" value="LysR family transcriptional regulator"/>
    <property type="match status" value="1"/>
</dbReference>
<dbReference type="Gene3D" id="3.40.190.290">
    <property type="match status" value="1"/>
</dbReference>
<dbReference type="Gene3D" id="1.10.10.10">
    <property type="entry name" value="Winged helix-like DNA-binding domain superfamily/Winged helix DNA-binding domain"/>
    <property type="match status" value="1"/>
</dbReference>
<dbReference type="InterPro" id="IPR005119">
    <property type="entry name" value="LysR_subst-bd"/>
</dbReference>
<dbReference type="InterPro" id="IPR000847">
    <property type="entry name" value="Tscrpt_reg_HTH_LysR"/>
</dbReference>
<dbReference type="InterPro" id="IPR036388">
    <property type="entry name" value="WH-like_DNA-bd_sf"/>
</dbReference>
<dbReference type="InterPro" id="IPR036390">
    <property type="entry name" value="WH_DNA-bd_sf"/>
</dbReference>
<dbReference type="NCBIfam" id="NF007917">
    <property type="entry name" value="PRK10632.1"/>
    <property type="match status" value="1"/>
</dbReference>
<dbReference type="PANTHER" id="PTHR30537:SF5">
    <property type="entry name" value="HTH-TYPE TRANSCRIPTIONAL ACTIVATOR TTDR-RELATED"/>
    <property type="match status" value="1"/>
</dbReference>
<dbReference type="PANTHER" id="PTHR30537">
    <property type="entry name" value="HTH-TYPE TRANSCRIPTIONAL REGULATOR"/>
    <property type="match status" value="1"/>
</dbReference>
<dbReference type="Pfam" id="PF00126">
    <property type="entry name" value="HTH_1"/>
    <property type="match status" value="1"/>
</dbReference>
<dbReference type="Pfam" id="PF03466">
    <property type="entry name" value="LysR_substrate"/>
    <property type="match status" value="1"/>
</dbReference>
<dbReference type="SUPFAM" id="SSF53850">
    <property type="entry name" value="Periplasmic binding protein-like II"/>
    <property type="match status" value="1"/>
</dbReference>
<dbReference type="SUPFAM" id="SSF46785">
    <property type="entry name" value="Winged helix' DNA-binding domain"/>
    <property type="match status" value="1"/>
</dbReference>
<dbReference type="PROSITE" id="PS50931">
    <property type="entry name" value="HTH_LYSR"/>
    <property type="match status" value="1"/>
</dbReference>
<name>AAER_ECOLI</name>
<accession>P67662</accession>
<accession>P45691</accession>
<accession>Q2M8X0</accession>
<proteinExistence type="evidence at protein level"/>
<organism>
    <name type="scientific">Escherichia coli (strain K12)</name>
    <dbReference type="NCBI Taxonomy" id="83333"/>
    <lineage>
        <taxon>Bacteria</taxon>
        <taxon>Pseudomonadati</taxon>
        <taxon>Pseudomonadota</taxon>
        <taxon>Gammaproteobacteria</taxon>
        <taxon>Enterobacterales</taxon>
        <taxon>Enterobacteriaceae</taxon>
        <taxon>Escherichia</taxon>
    </lineage>
</organism>
<comment type="function">
    <text evidence="2 3">Transcriptional regulator that activates expression of the aaeXAB operon, which is involved in the efflux of aromatic carboxylic acids such as p-hydroxybenzoic acid (pHBA) (PubMed:15489430, PubMed:34220787). In the presence of the effector pHBA, acts by binding to a single target within the aaeXAB-aaeR intergenic region (PubMed:34220787). In the absence of pHBA, binds more than 50 sites along the E.coli K12 genome, including genes related to biofilm formation and several genes involved in stress response, suggesting that it might play a role in quorum sensing in the absence of pHBA (PubMed:34220787).</text>
</comment>
<comment type="activity regulation">
    <text evidence="2 3">Activity is regulated by p-hydroxybenzoic acid.</text>
</comment>
<comment type="disruption phenotype">
    <text evidence="2">The mutant is hypersensitive to p-hydroxybenzoic acid.</text>
</comment>
<comment type="similarity">
    <text evidence="6">Belongs to the LysR transcriptional regulatory family.</text>
</comment>
<protein>
    <recommendedName>
        <fullName evidence="6">HTH-type transcriptional activator AaeR</fullName>
    </recommendedName>
    <alternativeName>
        <fullName evidence="5">Quorum sensing regulator A</fullName>
    </alternativeName>
</protein>
<reference key="1">
    <citation type="journal article" date="1997" name="Science">
        <title>The complete genome sequence of Escherichia coli K-12.</title>
        <authorList>
            <person name="Blattner F.R."/>
            <person name="Plunkett G. III"/>
            <person name="Bloch C.A."/>
            <person name="Perna N.T."/>
            <person name="Burland V."/>
            <person name="Riley M."/>
            <person name="Collado-Vides J."/>
            <person name="Glasner J.D."/>
            <person name="Rode C.K."/>
            <person name="Mayhew G.F."/>
            <person name="Gregor J."/>
            <person name="Davis N.W."/>
            <person name="Kirkpatrick H.A."/>
            <person name="Goeden M.A."/>
            <person name="Rose D.J."/>
            <person name="Mau B."/>
            <person name="Shao Y."/>
        </authorList>
    </citation>
    <scope>NUCLEOTIDE SEQUENCE [LARGE SCALE GENOMIC DNA]</scope>
    <source>
        <strain>K12 / MG1655 / ATCC 47076</strain>
    </source>
</reference>
<reference key="2">
    <citation type="journal article" date="2006" name="Mol. Syst. Biol.">
        <title>Highly accurate genome sequences of Escherichia coli K-12 strains MG1655 and W3110.</title>
        <authorList>
            <person name="Hayashi K."/>
            <person name="Morooka N."/>
            <person name="Yamamoto Y."/>
            <person name="Fujita K."/>
            <person name="Isono K."/>
            <person name="Choi S."/>
            <person name="Ohtsubo E."/>
            <person name="Baba T."/>
            <person name="Wanner B.L."/>
            <person name="Mori H."/>
            <person name="Horiuchi T."/>
        </authorList>
    </citation>
    <scope>NUCLEOTIDE SEQUENCE [LARGE SCALE GENOMIC DNA]</scope>
    <source>
        <strain>K12 / W3110 / ATCC 27325 / DSM 5911</strain>
    </source>
</reference>
<reference key="3">
    <citation type="journal article" date="2004" name="J. Bacteriol.">
        <title>Characterization of the Escherichia coli AaeAB efflux pump: a metabolic relief valve?</title>
        <authorList>
            <person name="Van Dyk T.K."/>
            <person name="Templeton L.J."/>
            <person name="Cantera K.A."/>
            <person name="Sharpe P.L."/>
            <person name="Sariaslani F.S."/>
        </authorList>
    </citation>
    <scope>FUNCTION</scope>
    <scope>ACTIVITY REGULATION</scope>
    <scope>DISRUPTION PHENOTYPE</scope>
    <source>
        <strain>K12 / MG1655 / ATCC 47076</strain>
    </source>
</reference>
<reference key="4">
    <citation type="journal article" date="2021" name="Front. Microbiol.">
        <title>Single-Target Regulators Constitute the Minority Group of Transcription Factors in Escherichia coli K-12.</title>
        <authorList>
            <person name="Shimada T."/>
            <person name="Ogasawara H."/>
            <person name="Kobayashi I."/>
            <person name="Kobayashi N."/>
            <person name="Ishihama A."/>
        </authorList>
    </citation>
    <scope>FUNCTION</scope>
    <scope>DNA-BINDING</scope>
    <scope>ACTIVITY REGULATION</scope>
    <source>
        <strain>K12</strain>
    </source>
</reference>
<keyword id="KW-0010">Activator</keyword>
<keyword id="KW-0238">DNA-binding</keyword>
<keyword id="KW-1185">Reference proteome</keyword>
<keyword id="KW-0804">Transcription</keyword>
<keyword id="KW-0805">Transcription regulation</keyword>
<feature type="chain" id="PRO_0000105580" description="HTH-type transcriptional activator AaeR">
    <location>
        <begin position="1"/>
        <end position="309"/>
    </location>
</feature>
<feature type="domain" description="HTH lysR-type" evidence="1">
    <location>
        <begin position="1"/>
        <end position="59"/>
    </location>
</feature>
<feature type="DNA-binding region" description="H-T-H motif" evidence="1">
    <location>
        <begin position="19"/>
        <end position="38"/>
    </location>
</feature>
<sequence length="309" mass="34516">MERLKRMSVFAKVVEFGSFTAAARQLQMSVSSISQTVSKLEDELQVKLLNRSTRSIGLTEAGRIYYQGCRRMLHEVQDVHEQLYAFNNTPIGTLRIGCSSTMAQNVLAGLTAKMLKEYPGLSVNLVTGIPAPDLIADGLDVVIRVGALQDSSLFSRRLGAMPMVVCAAKSYLTQYGIPEKPADLSSHSWLEYSVRPDNEFELIAPEGISTRLIPQGRFVTNDPMTLVRWLTAGAGIAYVPLMWVINEINRGELEILLPRYQSDPRPVYALYTEKDKLPLKVQVVINSLTDYFVEVGKLFQEMHGRGKEK</sequence>